<protein>
    <recommendedName>
        <fullName evidence="1">Small ribosomal subunit protein uS15</fullName>
    </recommendedName>
    <alternativeName>
        <fullName evidence="2">30S ribosomal protein S15</fullName>
    </alternativeName>
</protein>
<organism>
    <name type="scientific">Campylobacter curvus (strain 525.92)</name>
    <dbReference type="NCBI Taxonomy" id="360105"/>
    <lineage>
        <taxon>Bacteria</taxon>
        <taxon>Pseudomonadati</taxon>
        <taxon>Campylobacterota</taxon>
        <taxon>Epsilonproteobacteria</taxon>
        <taxon>Campylobacterales</taxon>
        <taxon>Campylobacteraceae</taxon>
        <taxon>Campylobacter</taxon>
    </lineage>
</organism>
<accession>A7GXT2</accession>
<dbReference type="EMBL" id="CP000767">
    <property type="protein sequence ID" value="EAU00671.2"/>
    <property type="molecule type" value="Genomic_DNA"/>
</dbReference>
<dbReference type="RefSeq" id="WP_011992145.1">
    <property type="nucleotide sequence ID" value="NC_009715.2"/>
</dbReference>
<dbReference type="SMR" id="A7GXT2"/>
<dbReference type="STRING" id="360105.CCV52592_1555"/>
<dbReference type="GeneID" id="61002023"/>
<dbReference type="KEGG" id="ccv:CCV52592_1555"/>
<dbReference type="HOGENOM" id="CLU_148518_0_0_7"/>
<dbReference type="OrthoDB" id="9799262at2"/>
<dbReference type="Proteomes" id="UP000006380">
    <property type="component" value="Chromosome"/>
</dbReference>
<dbReference type="GO" id="GO:0022627">
    <property type="term" value="C:cytosolic small ribosomal subunit"/>
    <property type="evidence" value="ECO:0007669"/>
    <property type="project" value="TreeGrafter"/>
</dbReference>
<dbReference type="GO" id="GO:0019843">
    <property type="term" value="F:rRNA binding"/>
    <property type="evidence" value="ECO:0007669"/>
    <property type="project" value="UniProtKB-UniRule"/>
</dbReference>
<dbReference type="GO" id="GO:0003735">
    <property type="term" value="F:structural constituent of ribosome"/>
    <property type="evidence" value="ECO:0007669"/>
    <property type="project" value="InterPro"/>
</dbReference>
<dbReference type="GO" id="GO:0006412">
    <property type="term" value="P:translation"/>
    <property type="evidence" value="ECO:0007669"/>
    <property type="project" value="UniProtKB-UniRule"/>
</dbReference>
<dbReference type="CDD" id="cd00353">
    <property type="entry name" value="Ribosomal_S15p_S13e"/>
    <property type="match status" value="1"/>
</dbReference>
<dbReference type="FunFam" id="1.10.287.10:FF:000002">
    <property type="entry name" value="30S ribosomal protein S15"/>
    <property type="match status" value="1"/>
</dbReference>
<dbReference type="Gene3D" id="6.10.250.3130">
    <property type="match status" value="1"/>
</dbReference>
<dbReference type="Gene3D" id="1.10.287.10">
    <property type="entry name" value="S15/NS1, RNA-binding"/>
    <property type="match status" value="1"/>
</dbReference>
<dbReference type="HAMAP" id="MF_01343_B">
    <property type="entry name" value="Ribosomal_uS15_B"/>
    <property type="match status" value="1"/>
</dbReference>
<dbReference type="InterPro" id="IPR000589">
    <property type="entry name" value="Ribosomal_uS15"/>
</dbReference>
<dbReference type="InterPro" id="IPR005290">
    <property type="entry name" value="Ribosomal_uS15_bac-type"/>
</dbReference>
<dbReference type="InterPro" id="IPR009068">
    <property type="entry name" value="uS15_NS1_RNA-bd_sf"/>
</dbReference>
<dbReference type="NCBIfam" id="TIGR00952">
    <property type="entry name" value="S15_bact"/>
    <property type="match status" value="1"/>
</dbReference>
<dbReference type="PANTHER" id="PTHR23321">
    <property type="entry name" value="RIBOSOMAL PROTEIN S15, BACTERIAL AND ORGANELLAR"/>
    <property type="match status" value="1"/>
</dbReference>
<dbReference type="PANTHER" id="PTHR23321:SF26">
    <property type="entry name" value="SMALL RIBOSOMAL SUBUNIT PROTEIN US15M"/>
    <property type="match status" value="1"/>
</dbReference>
<dbReference type="Pfam" id="PF00312">
    <property type="entry name" value="Ribosomal_S15"/>
    <property type="match status" value="1"/>
</dbReference>
<dbReference type="SMART" id="SM01387">
    <property type="entry name" value="Ribosomal_S15"/>
    <property type="match status" value="1"/>
</dbReference>
<dbReference type="SUPFAM" id="SSF47060">
    <property type="entry name" value="S15/NS1 RNA-binding domain"/>
    <property type="match status" value="1"/>
</dbReference>
<dbReference type="PROSITE" id="PS00362">
    <property type="entry name" value="RIBOSOMAL_S15"/>
    <property type="match status" value="1"/>
</dbReference>
<sequence length="90" mass="10207">MALDSAKKAEIVAKFARKEGDTGSPEVQIALLTARIAELTEHLKVFKKDFSSRLGLLKLVGQRKRLLKYLKNKDYTTYSKLIVELGIRDK</sequence>
<keyword id="KW-1185">Reference proteome</keyword>
<keyword id="KW-0687">Ribonucleoprotein</keyword>
<keyword id="KW-0689">Ribosomal protein</keyword>
<keyword id="KW-0694">RNA-binding</keyword>
<keyword id="KW-0699">rRNA-binding</keyword>
<comment type="function">
    <text evidence="1">One of the primary rRNA binding proteins, it binds directly to 16S rRNA where it helps nucleate assembly of the platform of the 30S subunit by binding and bridging several RNA helices of the 16S rRNA.</text>
</comment>
<comment type="function">
    <text evidence="1">Forms an intersubunit bridge (bridge B4) with the 23S rRNA of the 50S subunit in the ribosome.</text>
</comment>
<comment type="subunit">
    <text evidence="1">Part of the 30S ribosomal subunit. Forms a bridge to the 50S subunit in the 70S ribosome, contacting the 23S rRNA.</text>
</comment>
<comment type="similarity">
    <text evidence="1">Belongs to the universal ribosomal protein uS15 family.</text>
</comment>
<proteinExistence type="inferred from homology"/>
<reference key="1">
    <citation type="submission" date="2007-07" db="EMBL/GenBank/DDBJ databases">
        <title>Genome sequence of Campylobacter curvus 525.92 isolated from human feces.</title>
        <authorList>
            <person name="Fouts D.E."/>
            <person name="Mongodin E.F."/>
            <person name="Puiu D."/>
            <person name="Sebastian Y."/>
            <person name="Miller W.G."/>
            <person name="Mandrell R.E."/>
            <person name="Lastovica A.J."/>
            <person name="Nelson K.E."/>
        </authorList>
    </citation>
    <scope>NUCLEOTIDE SEQUENCE [LARGE SCALE GENOMIC DNA]</scope>
    <source>
        <strain>525.92</strain>
    </source>
</reference>
<feature type="chain" id="PRO_1000054768" description="Small ribosomal subunit protein uS15">
    <location>
        <begin position="1"/>
        <end position="90"/>
    </location>
</feature>
<name>RS15_CAMC5</name>
<evidence type="ECO:0000255" key="1">
    <source>
        <dbReference type="HAMAP-Rule" id="MF_01343"/>
    </source>
</evidence>
<evidence type="ECO:0000305" key="2"/>
<gene>
    <name evidence="1" type="primary">rpsO</name>
    <name type="ordered locus">Ccur92_07200</name>
    <name type="ORF">CCV52592_1555</name>
</gene>